<keyword id="KW-0963">Cytoplasm</keyword>
<keyword id="KW-0342">GTP-binding</keyword>
<keyword id="KW-0436">Ligase</keyword>
<keyword id="KW-0460">Magnesium</keyword>
<keyword id="KW-0479">Metal-binding</keyword>
<keyword id="KW-0547">Nucleotide-binding</keyword>
<keyword id="KW-0658">Purine biosynthesis</keyword>
<protein>
    <recommendedName>
        <fullName evidence="1">Adenylosuccinate synthetase</fullName>
        <shortName evidence="1">AMPSase</shortName>
        <shortName evidence="1">AdSS</shortName>
        <ecNumber evidence="1">6.3.4.4</ecNumber>
    </recommendedName>
    <alternativeName>
        <fullName evidence="1">IMP--aspartate ligase</fullName>
    </alternativeName>
</protein>
<dbReference type="EC" id="6.3.4.4" evidence="1"/>
<dbReference type="EMBL" id="CP000931">
    <property type="protein sequence ID" value="ABZ78221.1"/>
    <property type="molecule type" value="Genomic_DNA"/>
</dbReference>
<dbReference type="RefSeq" id="WP_012278739.1">
    <property type="nucleotide sequence ID" value="NC_010334.1"/>
</dbReference>
<dbReference type="SMR" id="B0TUV4"/>
<dbReference type="STRING" id="458817.Shal_3680"/>
<dbReference type="KEGG" id="shl:Shal_3680"/>
<dbReference type="eggNOG" id="COG0104">
    <property type="taxonomic scope" value="Bacteria"/>
</dbReference>
<dbReference type="HOGENOM" id="CLU_029848_0_0_6"/>
<dbReference type="OrthoDB" id="9807553at2"/>
<dbReference type="UniPathway" id="UPA00075">
    <property type="reaction ID" value="UER00335"/>
</dbReference>
<dbReference type="Proteomes" id="UP000001317">
    <property type="component" value="Chromosome"/>
</dbReference>
<dbReference type="GO" id="GO:0005737">
    <property type="term" value="C:cytoplasm"/>
    <property type="evidence" value="ECO:0007669"/>
    <property type="project" value="UniProtKB-SubCell"/>
</dbReference>
<dbReference type="GO" id="GO:0004019">
    <property type="term" value="F:adenylosuccinate synthase activity"/>
    <property type="evidence" value="ECO:0007669"/>
    <property type="project" value="UniProtKB-UniRule"/>
</dbReference>
<dbReference type="GO" id="GO:0005525">
    <property type="term" value="F:GTP binding"/>
    <property type="evidence" value="ECO:0007669"/>
    <property type="project" value="UniProtKB-UniRule"/>
</dbReference>
<dbReference type="GO" id="GO:0000287">
    <property type="term" value="F:magnesium ion binding"/>
    <property type="evidence" value="ECO:0007669"/>
    <property type="project" value="UniProtKB-UniRule"/>
</dbReference>
<dbReference type="GO" id="GO:0044208">
    <property type="term" value="P:'de novo' AMP biosynthetic process"/>
    <property type="evidence" value="ECO:0007669"/>
    <property type="project" value="UniProtKB-UniRule"/>
</dbReference>
<dbReference type="GO" id="GO:0046040">
    <property type="term" value="P:IMP metabolic process"/>
    <property type="evidence" value="ECO:0007669"/>
    <property type="project" value="TreeGrafter"/>
</dbReference>
<dbReference type="CDD" id="cd03108">
    <property type="entry name" value="AdSS"/>
    <property type="match status" value="1"/>
</dbReference>
<dbReference type="FunFam" id="1.10.300.10:FF:000001">
    <property type="entry name" value="Adenylosuccinate synthetase"/>
    <property type="match status" value="1"/>
</dbReference>
<dbReference type="FunFam" id="3.90.170.10:FF:000001">
    <property type="entry name" value="Adenylosuccinate synthetase"/>
    <property type="match status" value="1"/>
</dbReference>
<dbReference type="Gene3D" id="3.40.440.10">
    <property type="entry name" value="Adenylosuccinate Synthetase, subunit A, domain 1"/>
    <property type="match status" value="1"/>
</dbReference>
<dbReference type="Gene3D" id="1.10.300.10">
    <property type="entry name" value="Adenylosuccinate Synthetase, subunit A, domain 2"/>
    <property type="match status" value="1"/>
</dbReference>
<dbReference type="Gene3D" id="3.90.170.10">
    <property type="entry name" value="Adenylosuccinate Synthetase, subunit A, domain 3"/>
    <property type="match status" value="1"/>
</dbReference>
<dbReference type="HAMAP" id="MF_00011">
    <property type="entry name" value="Adenylosucc_synth"/>
    <property type="match status" value="1"/>
</dbReference>
<dbReference type="InterPro" id="IPR018220">
    <property type="entry name" value="Adenylosuccin_syn_GTP-bd"/>
</dbReference>
<dbReference type="InterPro" id="IPR033128">
    <property type="entry name" value="Adenylosuccin_syn_Lys_AS"/>
</dbReference>
<dbReference type="InterPro" id="IPR042109">
    <property type="entry name" value="Adenylosuccinate_synth_dom1"/>
</dbReference>
<dbReference type="InterPro" id="IPR042110">
    <property type="entry name" value="Adenylosuccinate_synth_dom2"/>
</dbReference>
<dbReference type="InterPro" id="IPR042111">
    <property type="entry name" value="Adenylosuccinate_synth_dom3"/>
</dbReference>
<dbReference type="InterPro" id="IPR001114">
    <property type="entry name" value="Adenylosuccinate_synthetase"/>
</dbReference>
<dbReference type="InterPro" id="IPR027417">
    <property type="entry name" value="P-loop_NTPase"/>
</dbReference>
<dbReference type="NCBIfam" id="NF002223">
    <property type="entry name" value="PRK01117.1"/>
    <property type="match status" value="1"/>
</dbReference>
<dbReference type="NCBIfam" id="TIGR00184">
    <property type="entry name" value="purA"/>
    <property type="match status" value="1"/>
</dbReference>
<dbReference type="PANTHER" id="PTHR11846">
    <property type="entry name" value="ADENYLOSUCCINATE SYNTHETASE"/>
    <property type="match status" value="1"/>
</dbReference>
<dbReference type="PANTHER" id="PTHR11846:SF0">
    <property type="entry name" value="ADENYLOSUCCINATE SYNTHETASE"/>
    <property type="match status" value="1"/>
</dbReference>
<dbReference type="Pfam" id="PF00709">
    <property type="entry name" value="Adenylsucc_synt"/>
    <property type="match status" value="1"/>
</dbReference>
<dbReference type="SMART" id="SM00788">
    <property type="entry name" value="Adenylsucc_synt"/>
    <property type="match status" value="1"/>
</dbReference>
<dbReference type="SUPFAM" id="SSF52540">
    <property type="entry name" value="P-loop containing nucleoside triphosphate hydrolases"/>
    <property type="match status" value="1"/>
</dbReference>
<dbReference type="PROSITE" id="PS01266">
    <property type="entry name" value="ADENYLOSUCCIN_SYN_1"/>
    <property type="match status" value="1"/>
</dbReference>
<dbReference type="PROSITE" id="PS00513">
    <property type="entry name" value="ADENYLOSUCCIN_SYN_2"/>
    <property type="match status" value="1"/>
</dbReference>
<accession>B0TUV4</accession>
<comment type="function">
    <text evidence="1">Plays an important role in the de novo pathway of purine nucleotide biosynthesis. Catalyzes the first committed step in the biosynthesis of AMP from IMP.</text>
</comment>
<comment type="catalytic activity">
    <reaction evidence="1">
        <text>IMP + L-aspartate + GTP = N(6)-(1,2-dicarboxyethyl)-AMP + GDP + phosphate + 2 H(+)</text>
        <dbReference type="Rhea" id="RHEA:15753"/>
        <dbReference type="ChEBI" id="CHEBI:15378"/>
        <dbReference type="ChEBI" id="CHEBI:29991"/>
        <dbReference type="ChEBI" id="CHEBI:37565"/>
        <dbReference type="ChEBI" id="CHEBI:43474"/>
        <dbReference type="ChEBI" id="CHEBI:57567"/>
        <dbReference type="ChEBI" id="CHEBI:58053"/>
        <dbReference type="ChEBI" id="CHEBI:58189"/>
        <dbReference type="EC" id="6.3.4.4"/>
    </reaction>
</comment>
<comment type="cofactor">
    <cofactor evidence="1">
        <name>Mg(2+)</name>
        <dbReference type="ChEBI" id="CHEBI:18420"/>
    </cofactor>
    <text evidence="1">Binds 1 Mg(2+) ion per subunit.</text>
</comment>
<comment type="pathway">
    <text evidence="1">Purine metabolism; AMP biosynthesis via de novo pathway; AMP from IMP: step 1/2.</text>
</comment>
<comment type="subunit">
    <text evidence="1">Homodimer.</text>
</comment>
<comment type="subcellular location">
    <subcellularLocation>
        <location evidence="1">Cytoplasm</location>
    </subcellularLocation>
</comment>
<comment type="similarity">
    <text evidence="1">Belongs to the adenylosuccinate synthetase family.</text>
</comment>
<gene>
    <name evidence="1" type="primary">purA</name>
    <name type="ordered locus">Shal_3680</name>
</gene>
<sequence length="431" mass="46824">MGKNVVVLGTQWGDEGKGKIVDLLTEQAKYVVRYQGGHNAGHTLVIDGDKTVLHLIPSGILRDNVKCIIGNGVVLAPDALMTEINMLKERGVPVEERLLISEACPLILPFHCALDVAREKARGNNAIGTTGRGIGPAYEDKVSRRGLRVGDLFDAELFATKLKEVMAYHNFMLTEYYKCEAVDYEETLKDALAIADYLKSMCTDVSELLDQARKAGEPILFEGAQGTLLDIDHGTYPFVTSSNTTAGGVATGSGFGPRHLDYVLGIMKAYTTRVGAGPFPTELKNEIGDYLGTKGHEFGATTGRKRRPGWLDVVAMKRAVQINSVSGFCLTKLDVLDGLEEVKICVGYQYPDGTVATTTPLAAEGYEKVTPVLETMPGWSETTFGATSVEQLPQAALNYIKRLEELLETPIDIISTGPDRNETMILVNPFS</sequence>
<organism>
    <name type="scientific">Shewanella halifaxensis (strain HAW-EB4)</name>
    <dbReference type="NCBI Taxonomy" id="458817"/>
    <lineage>
        <taxon>Bacteria</taxon>
        <taxon>Pseudomonadati</taxon>
        <taxon>Pseudomonadota</taxon>
        <taxon>Gammaproteobacteria</taxon>
        <taxon>Alteromonadales</taxon>
        <taxon>Shewanellaceae</taxon>
        <taxon>Shewanella</taxon>
    </lineage>
</organism>
<feature type="chain" id="PRO_1000073960" description="Adenylosuccinate synthetase">
    <location>
        <begin position="1"/>
        <end position="431"/>
    </location>
</feature>
<feature type="active site" description="Proton acceptor" evidence="1">
    <location>
        <position position="14"/>
    </location>
</feature>
<feature type="active site" description="Proton donor" evidence="1">
    <location>
        <position position="42"/>
    </location>
</feature>
<feature type="binding site" evidence="1">
    <location>
        <begin position="13"/>
        <end position="19"/>
    </location>
    <ligand>
        <name>GTP</name>
        <dbReference type="ChEBI" id="CHEBI:37565"/>
    </ligand>
</feature>
<feature type="binding site" description="in other chain" evidence="1">
    <location>
        <begin position="14"/>
        <end position="17"/>
    </location>
    <ligand>
        <name>IMP</name>
        <dbReference type="ChEBI" id="CHEBI:58053"/>
        <note>ligand shared between dimeric partners</note>
    </ligand>
</feature>
<feature type="binding site" evidence="1">
    <location>
        <position position="14"/>
    </location>
    <ligand>
        <name>Mg(2+)</name>
        <dbReference type="ChEBI" id="CHEBI:18420"/>
    </ligand>
</feature>
<feature type="binding site" description="in other chain" evidence="1">
    <location>
        <begin position="39"/>
        <end position="42"/>
    </location>
    <ligand>
        <name>IMP</name>
        <dbReference type="ChEBI" id="CHEBI:58053"/>
        <note>ligand shared between dimeric partners</note>
    </ligand>
</feature>
<feature type="binding site" evidence="1">
    <location>
        <begin position="41"/>
        <end position="43"/>
    </location>
    <ligand>
        <name>GTP</name>
        <dbReference type="ChEBI" id="CHEBI:37565"/>
    </ligand>
</feature>
<feature type="binding site" evidence="1">
    <location>
        <position position="41"/>
    </location>
    <ligand>
        <name>Mg(2+)</name>
        <dbReference type="ChEBI" id="CHEBI:18420"/>
    </ligand>
</feature>
<feature type="binding site" description="in other chain" evidence="1">
    <location>
        <position position="130"/>
    </location>
    <ligand>
        <name>IMP</name>
        <dbReference type="ChEBI" id="CHEBI:58053"/>
        <note>ligand shared between dimeric partners</note>
    </ligand>
</feature>
<feature type="binding site" evidence="1">
    <location>
        <position position="144"/>
    </location>
    <ligand>
        <name>IMP</name>
        <dbReference type="ChEBI" id="CHEBI:58053"/>
        <note>ligand shared between dimeric partners</note>
    </ligand>
</feature>
<feature type="binding site" description="in other chain" evidence="1">
    <location>
        <position position="225"/>
    </location>
    <ligand>
        <name>IMP</name>
        <dbReference type="ChEBI" id="CHEBI:58053"/>
        <note>ligand shared between dimeric partners</note>
    </ligand>
</feature>
<feature type="binding site" description="in other chain" evidence="1">
    <location>
        <position position="240"/>
    </location>
    <ligand>
        <name>IMP</name>
        <dbReference type="ChEBI" id="CHEBI:58053"/>
        <note>ligand shared between dimeric partners</note>
    </ligand>
</feature>
<feature type="binding site" evidence="1">
    <location>
        <begin position="300"/>
        <end position="306"/>
    </location>
    <ligand>
        <name>substrate</name>
    </ligand>
</feature>
<feature type="binding site" description="in other chain" evidence="1">
    <location>
        <position position="304"/>
    </location>
    <ligand>
        <name>IMP</name>
        <dbReference type="ChEBI" id="CHEBI:58053"/>
        <note>ligand shared between dimeric partners</note>
    </ligand>
</feature>
<feature type="binding site" evidence="1">
    <location>
        <position position="306"/>
    </location>
    <ligand>
        <name>GTP</name>
        <dbReference type="ChEBI" id="CHEBI:37565"/>
    </ligand>
</feature>
<feature type="binding site" evidence="1">
    <location>
        <begin position="332"/>
        <end position="334"/>
    </location>
    <ligand>
        <name>GTP</name>
        <dbReference type="ChEBI" id="CHEBI:37565"/>
    </ligand>
</feature>
<feature type="binding site" evidence="1">
    <location>
        <begin position="415"/>
        <end position="417"/>
    </location>
    <ligand>
        <name>GTP</name>
        <dbReference type="ChEBI" id="CHEBI:37565"/>
    </ligand>
</feature>
<name>PURA_SHEHH</name>
<reference key="1">
    <citation type="submission" date="2008-01" db="EMBL/GenBank/DDBJ databases">
        <title>Complete sequence of Shewanella halifaxensis HAW-EB4.</title>
        <authorList>
            <consortium name="US DOE Joint Genome Institute"/>
            <person name="Copeland A."/>
            <person name="Lucas S."/>
            <person name="Lapidus A."/>
            <person name="Glavina del Rio T."/>
            <person name="Dalin E."/>
            <person name="Tice H."/>
            <person name="Bruce D."/>
            <person name="Goodwin L."/>
            <person name="Pitluck S."/>
            <person name="Sims D."/>
            <person name="Brettin T."/>
            <person name="Detter J.C."/>
            <person name="Han C."/>
            <person name="Kuske C.R."/>
            <person name="Schmutz J."/>
            <person name="Larimer F."/>
            <person name="Land M."/>
            <person name="Hauser L."/>
            <person name="Kyrpides N."/>
            <person name="Kim E."/>
            <person name="Zhao J.-S."/>
            <person name="Richardson P."/>
        </authorList>
    </citation>
    <scope>NUCLEOTIDE SEQUENCE [LARGE SCALE GENOMIC DNA]</scope>
    <source>
        <strain>HAW-EB4</strain>
    </source>
</reference>
<proteinExistence type="inferred from homology"/>
<evidence type="ECO:0000255" key="1">
    <source>
        <dbReference type="HAMAP-Rule" id="MF_00011"/>
    </source>
</evidence>